<organism>
    <name type="scientific">Mus musculus</name>
    <name type="common">Mouse</name>
    <dbReference type="NCBI Taxonomy" id="10090"/>
    <lineage>
        <taxon>Eukaryota</taxon>
        <taxon>Metazoa</taxon>
        <taxon>Chordata</taxon>
        <taxon>Craniata</taxon>
        <taxon>Vertebrata</taxon>
        <taxon>Euteleostomi</taxon>
        <taxon>Mammalia</taxon>
        <taxon>Eutheria</taxon>
        <taxon>Euarchontoglires</taxon>
        <taxon>Glires</taxon>
        <taxon>Rodentia</taxon>
        <taxon>Myomorpha</taxon>
        <taxon>Muroidea</taxon>
        <taxon>Muridae</taxon>
        <taxon>Murinae</taxon>
        <taxon>Mus</taxon>
        <taxon>Mus</taxon>
    </lineage>
</organism>
<accession>Q64092</accession>
<accession>A2AEW3</accession>
<accession>A2AEW4</accession>
<accession>Q3U8H0</accession>
<accession>Q3UMV4</accession>
<accession>Q3UT52</accession>
<accession>Q7TNC1</accession>
<accession>Q8BN29</accession>
<gene>
    <name evidence="13 16" type="primary">Tfe3</name>
    <name type="synonym">Tcfe3</name>
</gene>
<reference key="1">
    <citation type="journal article" date="2005" name="Science">
        <title>The transcriptional landscape of the mammalian genome.</title>
        <authorList>
            <person name="Carninci P."/>
            <person name="Kasukawa T."/>
            <person name="Katayama S."/>
            <person name="Gough J."/>
            <person name="Frith M.C."/>
            <person name="Maeda N."/>
            <person name="Oyama R."/>
            <person name="Ravasi T."/>
            <person name="Lenhard B."/>
            <person name="Wells C."/>
            <person name="Kodzius R."/>
            <person name="Shimokawa K."/>
            <person name="Bajic V.B."/>
            <person name="Brenner S.E."/>
            <person name="Batalov S."/>
            <person name="Forrest A.R."/>
            <person name="Zavolan M."/>
            <person name="Davis M.J."/>
            <person name="Wilming L.G."/>
            <person name="Aidinis V."/>
            <person name="Allen J.E."/>
            <person name="Ambesi-Impiombato A."/>
            <person name="Apweiler R."/>
            <person name="Aturaliya R.N."/>
            <person name="Bailey T.L."/>
            <person name="Bansal M."/>
            <person name="Baxter L."/>
            <person name="Beisel K.W."/>
            <person name="Bersano T."/>
            <person name="Bono H."/>
            <person name="Chalk A.M."/>
            <person name="Chiu K.P."/>
            <person name="Choudhary V."/>
            <person name="Christoffels A."/>
            <person name="Clutterbuck D.R."/>
            <person name="Crowe M.L."/>
            <person name="Dalla E."/>
            <person name="Dalrymple B.P."/>
            <person name="de Bono B."/>
            <person name="Della Gatta G."/>
            <person name="di Bernardo D."/>
            <person name="Down T."/>
            <person name="Engstrom P."/>
            <person name="Fagiolini M."/>
            <person name="Faulkner G."/>
            <person name="Fletcher C.F."/>
            <person name="Fukushima T."/>
            <person name="Furuno M."/>
            <person name="Futaki S."/>
            <person name="Gariboldi M."/>
            <person name="Georgii-Hemming P."/>
            <person name="Gingeras T.R."/>
            <person name="Gojobori T."/>
            <person name="Green R.E."/>
            <person name="Gustincich S."/>
            <person name="Harbers M."/>
            <person name="Hayashi Y."/>
            <person name="Hensch T.K."/>
            <person name="Hirokawa N."/>
            <person name="Hill D."/>
            <person name="Huminiecki L."/>
            <person name="Iacono M."/>
            <person name="Ikeo K."/>
            <person name="Iwama A."/>
            <person name="Ishikawa T."/>
            <person name="Jakt M."/>
            <person name="Kanapin A."/>
            <person name="Katoh M."/>
            <person name="Kawasawa Y."/>
            <person name="Kelso J."/>
            <person name="Kitamura H."/>
            <person name="Kitano H."/>
            <person name="Kollias G."/>
            <person name="Krishnan S.P."/>
            <person name="Kruger A."/>
            <person name="Kummerfeld S.K."/>
            <person name="Kurochkin I.V."/>
            <person name="Lareau L.F."/>
            <person name="Lazarevic D."/>
            <person name="Lipovich L."/>
            <person name="Liu J."/>
            <person name="Liuni S."/>
            <person name="McWilliam S."/>
            <person name="Madan Babu M."/>
            <person name="Madera M."/>
            <person name="Marchionni L."/>
            <person name="Matsuda H."/>
            <person name="Matsuzawa S."/>
            <person name="Miki H."/>
            <person name="Mignone F."/>
            <person name="Miyake S."/>
            <person name="Morris K."/>
            <person name="Mottagui-Tabar S."/>
            <person name="Mulder N."/>
            <person name="Nakano N."/>
            <person name="Nakauchi H."/>
            <person name="Ng P."/>
            <person name="Nilsson R."/>
            <person name="Nishiguchi S."/>
            <person name="Nishikawa S."/>
            <person name="Nori F."/>
            <person name="Ohara O."/>
            <person name="Okazaki Y."/>
            <person name="Orlando V."/>
            <person name="Pang K.C."/>
            <person name="Pavan W.J."/>
            <person name="Pavesi G."/>
            <person name="Pesole G."/>
            <person name="Petrovsky N."/>
            <person name="Piazza S."/>
            <person name="Reed J."/>
            <person name="Reid J.F."/>
            <person name="Ring B.Z."/>
            <person name="Ringwald M."/>
            <person name="Rost B."/>
            <person name="Ruan Y."/>
            <person name="Salzberg S.L."/>
            <person name="Sandelin A."/>
            <person name="Schneider C."/>
            <person name="Schoenbach C."/>
            <person name="Sekiguchi K."/>
            <person name="Semple C.A."/>
            <person name="Seno S."/>
            <person name="Sessa L."/>
            <person name="Sheng Y."/>
            <person name="Shibata Y."/>
            <person name="Shimada H."/>
            <person name="Shimada K."/>
            <person name="Silva D."/>
            <person name="Sinclair B."/>
            <person name="Sperling S."/>
            <person name="Stupka E."/>
            <person name="Sugiura K."/>
            <person name="Sultana R."/>
            <person name="Takenaka Y."/>
            <person name="Taki K."/>
            <person name="Tammoja K."/>
            <person name="Tan S.L."/>
            <person name="Tang S."/>
            <person name="Taylor M.S."/>
            <person name="Tegner J."/>
            <person name="Teichmann S.A."/>
            <person name="Ueda H.R."/>
            <person name="van Nimwegen E."/>
            <person name="Verardo R."/>
            <person name="Wei C.L."/>
            <person name="Yagi K."/>
            <person name="Yamanishi H."/>
            <person name="Zabarovsky E."/>
            <person name="Zhu S."/>
            <person name="Zimmer A."/>
            <person name="Hide W."/>
            <person name="Bult C."/>
            <person name="Grimmond S.M."/>
            <person name="Teasdale R.D."/>
            <person name="Liu E.T."/>
            <person name="Brusic V."/>
            <person name="Quackenbush J."/>
            <person name="Wahlestedt C."/>
            <person name="Mattick J.S."/>
            <person name="Hume D.A."/>
            <person name="Kai C."/>
            <person name="Sasaki D."/>
            <person name="Tomaru Y."/>
            <person name="Fukuda S."/>
            <person name="Kanamori-Katayama M."/>
            <person name="Suzuki M."/>
            <person name="Aoki J."/>
            <person name="Arakawa T."/>
            <person name="Iida J."/>
            <person name="Imamura K."/>
            <person name="Itoh M."/>
            <person name="Kato T."/>
            <person name="Kawaji H."/>
            <person name="Kawagashira N."/>
            <person name="Kawashima T."/>
            <person name="Kojima M."/>
            <person name="Kondo S."/>
            <person name="Konno H."/>
            <person name="Nakano K."/>
            <person name="Ninomiya N."/>
            <person name="Nishio T."/>
            <person name="Okada M."/>
            <person name="Plessy C."/>
            <person name="Shibata K."/>
            <person name="Shiraki T."/>
            <person name="Suzuki S."/>
            <person name="Tagami M."/>
            <person name="Waki K."/>
            <person name="Watahiki A."/>
            <person name="Okamura-Oho Y."/>
            <person name="Suzuki H."/>
            <person name="Kawai J."/>
            <person name="Hayashizaki Y."/>
        </authorList>
    </citation>
    <scope>NUCLEOTIDE SEQUENCE [LARGE SCALE MRNA] (ISOFORMS 1; 2; 3 AND 4)</scope>
    <source>
        <strain>C57BL/6J</strain>
        <strain>NOD</strain>
        <tissue>Bone marrow</tissue>
        <tissue>Egg</tissue>
        <tissue>Lung</tissue>
        <tissue>Spleen</tissue>
    </source>
</reference>
<reference key="2">
    <citation type="journal article" date="2009" name="PLoS Biol.">
        <title>Lineage-specific biology revealed by a finished genome assembly of the mouse.</title>
        <authorList>
            <person name="Church D.M."/>
            <person name="Goodstadt L."/>
            <person name="Hillier L.W."/>
            <person name="Zody M.C."/>
            <person name="Goldstein S."/>
            <person name="She X."/>
            <person name="Bult C.J."/>
            <person name="Agarwala R."/>
            <person name="Cherry J.L."/>
            <person name="DiCuccio M."/>
            <person name="Hlavina W."/>
            <person name="Kapustin Y."/>
            <person name="Meric P."/>
            <person name="Maglott D."/>
            <person name="Birtle Z."/>
            <person name="Marques A.C."/>
            <person name="Graves T."/>
            <person name="Zhou S."/>
            <person name="Teague B."/>
            <person name="Potamousis K."/>
            <person name="Churas C."/>
            <person name="Place M."/>
            <person name="Herschleb J."/>
            <person name="Runnheim R."/>
            <person name="Forrest D."/>
            <person name="Amos-Landgraf J."/>
            <person name="Schwartz D.C."/>
            <person name="Cheng Z."/>
            <person name="Lindblad-Toh K."/>
            <person name="Eichler E.E."/>
            <person name="Ponting C.P."/>
        </authorList>
    </citation>
    <scope>NUCLEOTIDE SEQUENCE [LARGE SCALE GENOMIC DNA]</scope>
    <source>
        <strain>C57BL/6J</strain>
    </source>
</reference>
<reference key="3">
    <citation type="journal article" date="2004" name="Genome Res.">
        <title>The status, quality, and expansion of the NIH full-length cDNA project: the Mammalian Gene Collection (MGC).</title>
        <authorList>
            <consortium name="The MGC Project Team"/>
        </authorList>
    </citation>
    <scope>NUCLEOTIDE SEQUENCE [LARGE SCALE MRNA] (ISOFORM 1)</scope>
    <source>
        <strain>C57BL/6J</strain>
        <tissue>Brain</tissue>
    </source>
</reference>
<reference key="4">
    <citation type="journal article" date="1992" name="Mol. Cell. Biol.">
        <title>mTFE3, an X-linked transcriptional activator containing basic helix-loop-helix and zipper domains, utilizes the zipper to stabilize both DNA binding and multimerization.</title>
        <authorList>
            <person name="Roman C."/>
            <person name="Matera A.G."/>
            <person name="Cooper C."/>
            <person name="Artandi S."/>
            <person name="Blain S."/>
            <person name="Ward D.C."/>
            <person name="Calame K."/>
        </authorList>
    </citation>
    <scope>NUCLEOTIDE SEQUENCE [MRNA] OF 127-572</scope>
</reference>
<reference key="5">
    <citation type="journal article" date="2006" name="Nat. Immunol.">
        <title>Transcription factors TFE3 and TFEB are critical for CD40 ligand expression and thymus-dependent humoral immunity.</title>
        <authorList>
            <person name="Huan C."/>
            <person name="Kelly M.L."/>
            <person name="Steele R."/>
            <person name="Shapira I."/>
            <person name="Gottesman S.R.S."/>
            <person name="Roman C.A.J."/>
        </authorList>
    </citation>
    <scope>FUNCTION</scope>
    <scope>DNA-BINDING</scope>
    <scope>TISSUE SPECIFICITY</scope>
</reference>
<reference key="6">
    <citation type="journal article" date="2010" name="Cell">
        <title>A tissue-specific atlas of mouse protein phosphorylation and expression.</title>
        <authorList>
            <person name="Huttlin E.L."/>
            <person name="Jedrychowski M.P."/>
            <person name="Elias J.E."/>
            <person name="Goswami T."/>
            <person name="Rad R."/>
            <person name="Beausoleil S.A."/>
            <person name="Villen J."/>
            <person name="Haas W."/>
            <person name="Sowa M.E."/>
            <person name="Gygi S.P."/>
        </authorList>
    </citation>
    <scope>PHOSPHORYLATION [LARGE SCALE ANALYSIS] AT SER-545; SER-551; SER-553 AND SER-557</scope>
    <scope>IDENTIFICATION BY MASS SPECTROMETRY [LARGE SCALE ANALYSIS]</scope>
    <source>
        <tissue>Kidney</tissue>
        <tissue>Lung</tissue>
        <tissue>Spleen</tissue>
        <tissue>Testis</tissue>
    </source>
</reference>
<reference key="7">
    <citation type="journal article" date="2010" name="J. Biol. Chem.">
        <title>Post-transcriptional up-regulation of Tsc-22 by Ybx1, a target of miR-216a, mediates TGF-{beta}-induced collagen expression in kidney cells.</title>
        <authorList>
            <person name="Kato M."/>
            <person name="Wang L."/>
            <person name="Putta S."/>
            <person name="Wang M."/>
            <person name="Yuan H."/>
            <person name="Sun G."/>
            <person name="Lanting L."/>
            <person name="Todorov I."/>
            <person name="Rossi J.J."/>
            <person name="Natarajan R."/>
        </authorList>
    </citation>
    <scope>FUNCTION</scope>
    <scope>INTERACTION WITH TSC22D1</scope>
    <scope>INDUCTION BY TGF-BETA</scope>
</reference>
<reference key="8">
    <citation type="journal article" date="2010" name="PLoS ONE">
        <title>Inactivation of the FLCN tumor suppressor gene induces TFE3 transcriptional activity by increasing its nuclear localization.</title>
        <authorList>
            <person name="Hong S.B."/>
            <person name="Oh H."/>
            <person name="Valera V.A."/>
            <person name="Baba M."/>
            <person name="Schmidt L.S."/>
            <person name="Linehan W.M."/>
        </authorList>
    </citation>
    <scope>SUBCELLULAR LOCATION</scope>
</reference>
<reference key="9">
    <citation type="journal article" date="2013" name="Cell">
        <title>Exit from pluripotency is gated by intracellular redistribution of the bHLH transcription factor Tfe3.</title>
        <authorList>
            <person name="Betschinger J."/>
            <person name="Nichols J."/>
            <person name="Dietmann S."/>
            <person name="Corrin P.D."/>
            <person name="Paddison P.J."/>
            <person name="Smith A."/>
        </authorList>
    </citation>
    <scope>FUNCTION</scope>
    <scope>SUBCELLULAR LOCATION</scope>
</reference>
<reference key="10">
    <citation type="journal article" date="2014" name="Mol. Cell. Proteomics">
        <title>Immunoaffinity enrichment and mass spectrometry analysis of protein methylation.</title>
        <authorList>
            <person name="Guo A."/>
            <person name="Gu H."/>
            <person name="Zhou J."/>
            <person name="Mulhern D."/>
            <person name="Wang Y."/>
            <person name="Lee K.A."/>
            <person name="Yang V."/>
            <person name="Aguiar M."/>
            <person name="Kornhauser J."/>
            <person name="Jia X."/>
            <person name="Ren J."/>
            <person name="Beausoleil S.A."/>
            <person name="Silva J.C."/>
            <person name="Vemulapalli V."/>
            <person name="Bedford M.T."/>
            <person name="Comb M.J."/>
        </authorList>
    </citation>
    <scope>METHYLATION [LARGE SCALE ANALYSIS] AT ARG-187</scope>
    <scope>IDENTIFICATION BY MASS SPECTROMETRY [LARGE SCALE ANALYSIS]</scope>
    <source>
        <tissue>Embryo</tissue>
    </source>
</reference>
<reference key="11">
    <citation type="journal article" date="2016" name="Genes Dev.">
        <title>The tumor suppressor FLCN mediates an alternate mTOR pathway to regulate browning of adipose tissue.</title>
        <authorList>
            <person name="Wada S."/>
            <person name="Neinast M."/>
            <person name="Jang C."/>
            <person name="Ibrahim Y.H."/>
            <person name="Lee G."/>
            <person name="Babu A."/>
            <person name="Li J."/>
            <person name="Hoshino A."/>
            <person name="Rowe G.C."/>
            <person name="Rhee J."/>
            <person name="Martina J.A."/>
            <person name="Puertollano R."/>
            <person name="Blenis J."/>
            <person name="Morley M."/>
            <person name="Baur J.A."/>
            <person name="Seale P."/>
            <person name="Arany Z."/>
        </authorList>
    </citation>
    <scope>FUNCTION</scope>
    <scope>SUBCELLULAR LOCATION</scope>
    <scope>PHOSPHORYLATION AT SER-320</scope>
    <scope>MUTAGENESIS OF SER-320</scope>
</reference>
<reference key="12">
    <citation type="journal article" date="2017" name="Nat. Commun.">
        <title>TFEB regulates lysosomal positioning by modulating TMEM55B expression and JIP4 recruitment to lysosomes.</title>
        <authorList>
            <person name="Willett R."/>
            <person name="Martina J.A."/>
            <person name="Zewe J.P."/>
            <person name="Wills R."/>
            <person name="Hammond G.R.V."/>
            <person name="Puertollano R."/>
        </authorList>
    </citation>
    <scope>FUNCTION</scope>
</reference>
<reference key="13">
    <citation type="journal article" date="2019" name="Cell Stem Cell">
        <title>Lysosomal signaling licenses embryonic stem cell differentiation via inactivation of Tfe3.</title>
        <authorList>
            <person name="Villegas F."/>
            <person name="Lehalle D."/>
            <person name="Mayer D."/>
            <person name="Rittirsch M."/>
            <person name="Stadler M.B."/>
            <person name="Zinner M."/>
            <person name="Olivieri D."/>
            <person name="Vabres P."/>
            <person name="Duplomb-Jego L."/>
            <person name="De Bont E.S.J.M."/>
            <person name="Duffourd Y."/>
            <person name="Duijkers F."/>
            <person name="Avila M."/>
            <person name="Genevieve D."/>
            <person name="Houcinat N."/>
            <person name="Jouan T."/>
            <person name="Kuentz P."/>
            <person name="Lichtenbelt K.D."/>
            <person name="Thauvin-Robinet C."/>
            <person name="St-Onge J."/>
            <person name="Thevenon J."/>
            <person name="van Gassen K.L.I."/>
            <person name="van Haelst M."/>
            <person name="van Koningsbruggen S."/>
            <person name="Hess D."/>
            <person name="Smallwood S.A."/>
            <person name="Riviere J.B."/>
            <person name="Faivre L."/>
            <person name="Betschinger J."/>
        </authorList>
    </citation>
    <scope>FUNCTION</scope>
    <scope>INTERACTION WITH RRAGC AND RRAGD</scope>
</reference>
<keyword id="KW-0010">Activator</keyword>
<keyword id="KW-1064">Adaptive immunity</keyword>
<keyword id="KW-0025">Alternative splicing</keyword>
<keyword id="KW-0963">Cytoplasm</keyword>
<keyword id="KW-0238">DNA-binding</keyword>
<keyword id="KW-0391">Immunity</keyword>
<keyword id="KW-1017">Isopeptide bond</keyword>
<keyword id="KW-0458">Lysosome</keyword>
<keyword id="KW-0472">Membrane</keyword>
<keyword id="KW-0488">Methylation</keyword>
<keyword id="KW-0539">Nucleus</keyword>
<keyword id="KW-0597">Phosphoprotein</keyword>
<keyword id="KW-1185">Reference proteome</keyword>
<keyword id="KW-0804">Transcription</keyword>
<keyword id="KW-0805">Transcription regulation</keyword>
<keyword id="KW-0832">Ubl conjugation</keyword>
<evidence type="ECO:0000250" key="1">
    <source>
        <dbReference type="UniProtKB" id="P19532"/>
    </source>
</evidence>
<evidence type="ECO:0000255" key="2"/>
<evidence type="ECO:0000255" key="3">
    <source>
        <dbReference type="PROSITE-ProRule" id="PRU00981"/>
    </source>
</evidence>
<evidence type="ECO:0000256" key="4">
    <source>
        <dbReference type="SAM" id="MobiDB-lite"/>
    </source>
</evidence>
<evidence type="ECO:0000269" key="5">
    <source>
    </source>
</evidence>
<evidence type="ECO:0000269" key="6">
    <source>
    </source>
</evidence>
<evidence type="ECO:0000269" key="7">
    <source>
    </source>
</evidence>
<evidence type="ECO:0000269" key="8">
    <source>
    </source>
</evidence>
<evidence type="ECO:0000269" key="9">
    <source>
    </source>
</evidence>
<evidence type="ECO:0000269" key="10">
    <source>
    </source>
</evidence>
<evidence type="ECO:0000269" key="11">
    <source>
    </source>
</evidence>
<evidence type="ECO:0000303" key="12">
    <source>
    </source>
</evidence>
<evidence type="ECO:0000303" key="13">
    <source>
    </source>
</evidence>
<evidence type="ECO:0000305" key="14"/>
<evidence type="ECO:0000305" key="15">
    <source>
    </source>
</evidence>
<evidence type="ECO:0000312" key="16">
    <source>
        <dbReference type="MGI" id="MGI:98511"/>
    </source>
</evidence>
<evidence type="ECO:0007744" key="17">
    <source>
    </source>
</evidence>
<evidence type="ECO:0007744" key="18">
    <source>
    </source>
</evidence>
<name>TFE3_MOUSE</name>
<sequence>MSHAAEPARDAVEASAEGPRAVFLLLEERRPAESAQLLSLNSLLPESGIVADIELENILDPDSFYELKSQPLFLRSSLPISLQATPTTPATLSASSSAGGSRTPAMSSSSSRVLLRQQLMRAQAQEQERRERREQAAAAPFPSPAPASPAISVIGVSAGGHTLSRPPPAQVPREVLKVQTHLENPTRYHLQQARRQQVKQYLSTTLGPKLASQALTPPPGPSSAQPLPAPETAHATGPTGSAPNSPMALLTIGSSSEKEIDDVIDEIISLESSYNDEMLSYLPGGTAGLQLPSTLPVSGNLLDVYSSQGVATPAITVSNSCPAELPNIKREISETEAKALLKERQKKDNHNLIERRRRFNINDRIKELGTLIPKSNDPEMRWNKGTILKASVDYIRKLQKEQQRSKDLESRQRSLEQANRSLQLRIQELELQAQIHGLPVPPNPGLLSLTTSSVSDSLKPEQLDIEEEGRPSTTFHVSGGPAQNAPPQQPPAPPSDALLDLHFPSDHLGDLGDPFHLGLEDILMEEEGMVGGLSGGALSPLRAASDPLLSSVSPAVSKASSRRSSFSMEEES</sequence>
<feature type="chain" id="PRO_0000127472" description="Transcription factor E3">
    <location>
        <begin position="1"/>
        <end position="572"/>
    </location>
</feature>
<feature type="domain" description="bHLH" evidence="3">
    <location>
        <begin position="345"/>
        <end position="398"/>
    </location>
</feature>
<feature type="region of interest" description="Disordered" evidence="4">
    <location>
        <begin position="87"/>
        <end position="152"/>
    </location>
</feature>
<feature type="region of interest" description="Disordered" evidence="4">
    <location>
        <begin position="210"/>
        <end position="248"/>
    </location>
</feature>
<feature type="region of interest" description="Strong transcription activation domain" evidence="2">
    <location>
        <begin position="259"/>
        <end position="270"/>
    </location>
</feature>
<feature type="region of interest" description="Leucine-zipper">
    <location>
        <begin position="408"/>
        <end position="429"/>
    </location>
</feature>
<feature type="region of interest" description="Disordered" evidence="4">
    <location>
        <begin position="439"/>
        <end position="495"/>
    </location>
</feature>
<feature type="region of interest" description="Disordered" evidence="4">
    <location>
        <begin position="530"/>
        <end position="572"/>
    </location>
</feature>
<feature type="short sequence motif" description="Nuclear localization signal" evidence="1">
    <location>
        <begin position="355"/>
        <end position="358"/>
    </location>
</feature>
<feature type="compositionally biased region" description="Low complexity" evidence="4">
    <location>
        <begin position="87"/>
        <end position="125"/>
    </location>
</feature>
<feature type="compositionally biased region" description="Basic and acidic residues" evidence="4">
    <location>
        <begin position="126"/>
        <end position="135"/>
    </location>
</feature>
<feature type="compositionally biased region" description="Low complexity" evidence="4">
    <location>
        <begin position="446"/>
        <end position="457"/>
    </location>
</feature>
<feature type="compositionally biased region" description="Low complexity" evidence="4">
    <location>
        <begin position="543"/>
        <end position="572"/>
    </location>
</feature>
<feature type="modified residue" description="Phosphoserine; by MTOR" evidence="1">
    <location>
        <position position="47"/>
    </location>
</feature>
<feature type="modified residue" description="Asymmetric dimethylarginine" evidence="18">
    <location>
        <position position="187"/>
    </location>
</feature>
<feature type="modified residue" description="Phosphoserine; by MTOR" evidence="9">
    <location>
        <position position="320"/>
    </location>
</feature>
<feature type="modified residue" description="Phosphoserine" evidence="1">
    <location>
        <position position="539"/>
    </location>
</feature>
<feature type="modified residue" description="Phosphoserine" evidence="17">
    <location>
        <position position="545"/>
    </location>
</feature>
<feature type="modified residue" description="Phosphoserine" evidence="17">
    <location>
        <position position="551"/>
    </location>
</feature>
<feature type="modified residue" description="Phosphoserine" evidence="17">
    <location>
        <position position="553"/>
    </location>
</feature>
<feature type="modified residue" description="Phosphoserine" evidence="17">
    <location>
        <position position="557"/>
    </location>
</feature>
<feature type="modified residue" description="Phosphoserine" evidence="1">
    <location>
        <position position="565"/>
    </location>
</feature>
<feature type="cross-link" description="Glycyl lysine isopeptide (Lys-Gly) (interchain with G-Cter in SUMO2)" evidence="1">
    <location>
        <position position="338"/>
    </location>
</feature>
<feature type="splice variant" id="VSP_022143" description="In isoform 2 and isoform 3." evidence="12">
    <location>
        <begin position="1"/>
        <end position="105"/>
    </location>
</feature>
<feature type="splice variant" id="VSP_022144" description="In isoform 3 and isoform 4." evidence="12">
    <location>
        <begin position="260"/>
        <end position="294"/>
    </location>
</feature>
<feature type="mutagenesis site" description="Impaired phosphorylation by MTOR, leading to constitutive nuclear localization." evidence="9">
    <original>S</original>
    <variation>A</variation>
    <location>
        <position position="320"/>
    </location>
</feature>
<feature type="sequence conflict" description="In Ref. 1; BAE24128/BAE25994." evidence="14" ref="1">
    <original>F</original>
    <variation>S</variation>
    <location>
        <position position="73"/>
    </location>
</feature>
<feature type="sequence conflict" description="In Ref. 4; AAB21130." evidence="14" ref="4">
    <original>QERRE</original>
    <variation>TSGTR</variation>
    <location>
        <begin position="127"/>
        <end position="131"/>
    </location>
</feature>
<feature type="sequence conflict" description="In Ref. 1; BAE25994." evidence="14" ref="1">
    <original>S</original>
    <variation>G</variation>
    <location>
        <position position="143"/>
    </location>
</feature>
<feature type="sequence conflict" description="In Ref. 4; AAB21130." evidence="14" ref="4">
    <original>K</original>
    <variation>N</variation>
    <location>
        <position position="558"/>
    </location>
</feature>
<feature type="sequence conflict" description="In Ref. 4; AAB21130." evidence="14" ref="4">
    <original>M</original>
    <variation>I</variation>
    <location>
        <position position="568"/>
    </location>
</feature>
<protein>
    <recommendedName>
        <fullName evidence="13">Transcription factor E3</fullName>
        <shortName evidence="13">mTFE3</shortName>
    </recommendedName>
</protein>
<proteinExistence type="evidence at protein level"/>
<comment type="function">
    <text evidence="1 5 6 8 9 10 11">Transcription factor that acts as a master regulator of lysosomal biogenesis and immune response (PubMed:16936731, PubMed:29146937). Specifically recognizes and binds E-box sequences (5'-CANNTG-3'); efficient DNA-binding requires dimerization with itself or with another MiT/TFE family member such as TFEB or MITF (PubMed:16936731). Involved in the cellular response to amino acid availability by acting downstream of MTOR: in the presence of nutrients, TFE3 phosphorylation by MTOR promotes its inactivation (PubMed:27913603). Upon starvation or lysosomal stress, inhibition of MTOR induces TFE3 dephosphorylation, resulting in transcription factor activity (PubMed:27913603). Specifically recognizes and binds the CLEAR-box sequence (5'-GTCACGTGAC-3') present in the regulatory region of many lysosomal genes, leading to activate their expression, thereby playing a central role in expression of lysosomal genes (By similarity). Maintains the pluripotent state of embryonic stem cells by promoting the expression of genes such as ESRRB; mTOR-dependent TFE3 cytosolic retention and inactivation promotes exit from pluripotency (PubMed:23582324). Required to maintain the naive pluripotent state of hematopoietic stem cell; mTOR-dependent cytoplasmic retention of TFE3 promotes the exit of hematopoietic stem cell from pluripotency (By similarity). TFE3 activity is also involved in the inhibition of neuronal progenitor differentiation (PubMed:30595499). Acts as a positive regulator of browning of adipose tissue by promoting expression of target genes; mTOR-dependent phosphorylation promotes cytoplasmic retention of TFE3 and inhibits browning of adipose tissue (PubMed:27913603). In association with TFEB, activates the expression of CD40L in T-cells, thereby playing a role in T-cell-dependent antibody responses in activated CD4(+) T-cells and thymus-dependent humoral immunity (PubMed:16936731). Specifically recognizes the MUE3 box, a subset of E-boxes, present in the immunoglobulin enhancer (By similarity). It also binds very well to a USF/MLTF site (By similarity). Promotes TGF-beta-induced transcription of COL1A2; via its interaction with TSC22D1 at E-boxes in the gene proximal promoter (PubMed:20713358). May regulate lysosomal positioning in response to nutrient deprivation by promoting the expression of PIP4P1 (PubMed:29146937).</text>
</comment>
<comment type="subunit">
    <text evidence="1 6 11">Homodimer and heterodimer; with TFEB or MITF (By similarity). Interacts with RRAGC/RagC GDP-bound and RRAGD/RagD GDP-bound; promoting its recruitment to lysosomal membrane in the presence of nutrients (PubMed:30595499). Interacts with TSC22D1; the interaction is enhanced in the presence of TGF-beta (PubMed:20713358).</text>
</comment>
<comment type="subcellular location">
    <subcellularLocation>
        <location evidence="8 9 15">Cytoplasm</location>
        <location evidence="8 9 15">Cytosol</location>
    </subcellularLocation>
    <subcellularLocation>
        <location evidence="7 8 9">Nucleus</location>
    </subcellularLocation>
    <subcellularLocation>
        <location evidence="1">Lysosome membrane</location>
    </subcellularLocation>
    <text evidence="1 8 9">When nutrients are present, recruited to the lysosomal membrane via association with GDP-bound RagC/RRAGC (or RagD/RRAGD): it is then phosphorylated by MTOR (By similarity). Phosphorylation by MTOR prevents nuclear translocation and promotes ubiquitination and degradation (PubMed:23582324, PubMed:27913603). Conversely, inhibition of mTORC1, starvation and lysosomal disruption, promotes dephosphorylation and translocation to the nucleus (PubMed:23582324, PubMed:27913603).</text>
</comment>
<comment type="alternative products">
    <event type="alternative splicing"/>
    <isoform>
        <id>Q64092-1</id>
        <name>1</name>
        <sequence type="displayed"/>
    </isoform>
    <isoform>
        <id>Q64092-2</id>
        <name>2</name>
        <sequence type="described" ref="VSP_022143"/>
    </isoform>
    <isoform>
        <id>Q64092-3</id>
        <name>3</name>
        <sequence type="described" ref="VSP_022143 VSP_022144"/>
    </isoform>
    <isoform>
        <id>Q64092-4</id>
        <name>4</name>
        <sequence type="described" ref="VSP_022144"/>
    </isoform>
</comment>
<comment type="tissue specificity">
    <text evidence="5">Widely expressed.</text>
</comment>
<comment type="induction">
    <text evidence="6">Induced by TGF-beta.</text>
</comment>
<comment type="PTM">
    <text evidence="1">Sumoylated; does not affect dimerization with MITF.</text>
</comment>
<comment type="PTM">
    <text evidence="1 9">Phosphorylation ar Ser-47 and Ser-320 by MTOR via non-canonical mTORC1 pathway regulates its stability and subcellular location, respectively (PubMed:27913603). When nutrients are present, phosphorylation by MTOR at Ser-47 promotes ubiquitination by the SCF(BTRC) complex, followed by degradation (By similarity). When nutrients are present, phosphorylation by MTOR at Ser-320 also promotes association with 14-3-3/YWHA adapters and retention in the cytosol (PubMed:27913603). Phosphorylation at Ser-47 plays a more critical role than phosphorylation at Ser-320 for TFE3 inactivation (By similarity). Inhibition of mTORC1, starvation and lysosomal disruption, promotes dephosphorylation and transcription factor activity (PubMed:27913603).</text>
</comment>
<comment type="PTM">
    <text evidence="1">Ubiquitinated by the SCF(BTRC) and SCF(FBXW11) complexes following phosphorylation at Ser-47 by MTOR, leading to its degradation by the proteasome.</text>
</comment>
<comment type="similarity">
    <text evidence="14">Belongs to the MiT/TFE family.</text>
</comment>
<dbReference type="EMBL" id="AK089762">
    <property type="protein sequence ID" value="BAC40955.1"/>
    <property type="molecule type" value="mRNA"/>
</dbReference>
<dbReference type="EMBL" id="AK139756">
    <property type="protein sequence ID" value="BAE24128.1"/>
    <property type="molecule type" value="mRNA"/>
</dbReference>
<dbReference type="EMBL" id="AK144657">
    <property type="protein sequence ID" value="BAE25994.1"/>
    <property type="molecule type" value="mRNA"/>
</dbReference>
<dbReference type="EMBL" id="AK152221">
    <property type="protein sequence ID" value="BAE31048.1"/>
    <property type="molecule type" value="mRNA"/>
</dbReference>
<dbReference type="EMBL" id="AL671995">
    <property type="status" value="NOT_ANNOTATED_CDS"/>
    <property type="molecule type" value="Genomic_DNA"/>
</dbReference>
<dbReference type="EMBL" id="BC056358">
    <property type="protein sequence ID" value="AAH56358.1"/>
    <property type="molecule type" value="mRNA"/>
</dbReference>
<dbReference type="EMBL" id="BC063047">
    <property type="protein sequence ID" value="AAH63047.1"/>
    <property type="molecule type" value="mRNA"/>
</dbReference>
<dbReference type="EMBL" id="S76673">
    <property type="protein sequence ID" value="AAB21130.1"/>
    <property type="molecule type" value="mRNA"/>
</dbReference>
<dbReference type="CCDS" id="CCDS52984.1">
    <molecule id="Q64092-1"/>
</dbReference>
<dbReference type="CCDS" id="CCDS52985.1">
    <molecule id="Q64092-4"/>
</dbReference>
<dbReference type="CCDS" id="CCDS72332.1">
    <molecule id="Q64092-2"/>
</dbReference>
<dbReference type="CCDS" id="CCDS72333.1">
    <molecule id="Q64092-3"/>
</dbReference>
<dbReference type="PIR" id="A42029">
    <property type="entry name" value="A42029"/>
</dbReference>
<dbReference type="RefSeq" id="NP_001098666.1">
    <property type="nucleotide sequence ID" value="NM_001105196.1"/>
</dbReference>
<dbReference type="RefSeq" id="NP_001098667.1">
    <molecule id="Q64092-2"/>
    <property type="nucleotide sequence ID" value="NM_001105197.1"/>
</dbReference>
<dbReference type="RefSeq" id="NP_001258418.1">
    <molecule id="Q64092-2"/>
    <property type="nucleotide sequence ID" value="NM_001271489.1"/>
</dbReference>
<dbReference type="RefSeq" id="NP_001258419.1">
    <molecule id="Q64092-2"/>
    <property type="nucleotide sequence ID" value="NM_001271490.1"/>
</dbReference>
<dbReference type="RefSeq" id="NP_001258420.1">
    <molecule id="Q64092-3"/>
    <property type="nucleotide sequence ID" value="NM_001271491.1"/>
</dbReference>
<dbReference type="RefSeq" id="NP_766060.2">
    <property type="nucleotide sequence ID" value="NM_172472.3"/>
</dbReference>
<dbReference type="RefSeq" id="XP_006527641.1">
    <molecule id="Q64092-2"/>
    <property type="nucleotide sequence ID" value="XM_006527578.3"/>
</dbReference>
<dbReference type="RefSeq" id="XP_017173942.1">
    <molecule id="Q64092-2"/>
    <property type="nucleotide sequence ID" value="XM_017318453.3"/>
</dbReference>
<dbReference type="RefSeq" id="XP_017173943.1">
    <molecule id="Q64092-3"/>
    <property type="nucleotide sequence ID" value="XM_017318454.3"/>
</dbReference>
<dbReference type="RefSeq" id="XP_036017791.1">
    <molecule id="Q64092-2"/>
    <property type="nucleotide sequence ID" value="XM_036161898.1"/>
</dbReference>
<dbReference type="RefSeq" id="XP_036017792.1">
    <molecule id="Q64092-2"/>
    <property type="nucleotide sequence ID" value="XM_036161899.1"/>
</dbReference>
<dbReference type="RefSeq" id="XP_036017793.1">
    <molecule id="Q64092-3"/>
    <property type="nucleotide sequence ID" value="XM_036161900.1"/>
</dbReference>
<dbReference type="SMR" id="Q64092"/>
<dbReference type="BioGRID" id="229078">
    <property type="interactions" value="325"/>
</dbReference>
<dbReference type="FunCoup" id="Q64092">
    <property type="interactions" value="2804"/>
</dbReference>
<dbReference type="IntAct" id="Q64092">
    <property type="interactions" value="1"/>
</dbReference>
<dbReference type="STRING" id="10090.ENSMUSP00000076864"/>
<dbReference type="GlyGen" id="Q64092">
    <property type="glycosylation" value="5 sites, 1 O-linked glycan (4 sites)"/>
</dbReference>
<dbReference type="iPTMnet" id="Q64092"/>
<dbReference type="PhosphoSitePlus" id="Q64092"/>
<dbReference type="jPOST" id="Q64092"/>
<dbReference type="PaxDb" id="10090-ENSMUSP00000076864"/>
<dbReference type="ProteomicsDB" id="263164">
    <molecule id="Q64092-1"/>
</dbReference>
<dbReference type="ProteomicsDB" id="263165">
    <molecule id="Q64092-2"/>
</dbReference>
<dbReference type="ProteomicsDB" id="263166">
    <molecule id="Q64092-3"/>
</dbReference>
<dbReference type="ProteomicsDB" id="263167">
    <molecule id="Q64092-4"/>
</dbReference>
<dbReference type="Pumba" id="Q64092"/>
<dbReference type="Antibodypedia" id="11943">
    <property type="antibodies" value="442 antibodies from 39 providers"/>
</dbReference>
<dbReference type="DNASU" id="209446"/>
<dbReference type="Ensembl" id="ENSMUST00000101695.9">
    <molecule id="Q64092-2"/>
    <property type="protein sequence ID" value="ENSMUSP00000099219.3"/>
    <property type="gene ID" value="ENSMUSG00000000134.18"/>
</dbReference>
<dbReference type="Ensembl" id="ENSMUST00000115677.8">
    <molecule id="Q64092-2"/>
    <property type="protein sequence ID" value="ENSMUSP00000111341.2"/>
    <property type="gene ID" value="ENSMUSG00000000134.18"/>
</dbReference>
<dbReference type="Ensembl" id="ENSMUST00000115678.3">
    <molecule id="Q64092-3"/>
    <property type="protein sequence ID" value="ENSMUSP00000111342.3"/>
    <property type="gene ID" value="ENSMUSG00000000134.18"/>
</dbReference>
<dbReference type="Ensembl" id="ENSMUST00000115679.8">
    <molecule id="Q64092-2"/>
    <property type="protein sequence ID" value="ENSMUSP00000111343.2"/>
    <property type="gene ID" value="ENSMUSG00000000134.18"/>
</dbReference>
<dbReference type="Ensembl" id="ENSMUST00000137467.8">
    <molecule id="Q64092-2"/>
    <property type="protein sequence ID" value="ENSMUSP00000134125.2"/>
    <property type="gene ID" value="ENSMUSG00000000134.18"/>
</dbReference>
<dbReference type="GeneID" id="209446"/>
<dbReference type="KEGG" id="mmu:209446"/>
<dbReference type="UCSC" id="uc009smg.2">
    <molecule id="Q64092-1"/>
    <property type="organism name" value="mouse"/>
</dbReference>
<dbReference type="UCSC" id="uc009smk.2">
    <molecule id="Q64092-3"/>
    <property type="organism name" value="mouse"/>
</dbReference>
<dbReference type="AGR" id="MGI:98511"/>
<dbReference type="CTD" id="7030"/>
<dbReference type="MGI" id="MGI:98511">
    <property type="gene designation" value="Tfe3"/>
</dbReference>
<dbReference type="VEuPathDB" id="HostDB:ENSMUSG00000000134"/>
<dbReference type="eggNOG" id="KOG1318">
    <property type="taxonomic scope" value="Eukaryota"/>
</dbReference>
<dbReference type="GeneTree" id="ENSGT00940000157503"/>
<dbReference type="HOGENOM" id="CLU_031638_3_2_1"/>
<dbReference type="InParanoid" id="Q64092"/>
<dbReference type="OMA" id="ATFHAGE"/>
<dbReference type="OrthoDB" id="88425at9989"/>
<dbReference type="BioGRID-ORCS" id="209446">
    <property type="hits" value="5 hits in 78 CRISPR screens"/>
</dbReference>
<dbReference type="PRO" id="PR:Q64092"/>
<dbReference type="Proteomes" id="UP000000589">
    <property type="component" value="Chromosome X"/>
</dbReference>
<dbReference type="RNAct" id="Q64092">
    <property type="molecule type" value="protein"/>
</dbReference>
<dbReference type="Bgee" id="ENSMUSG00000000134">
    <property type="expression patterns" value="Expressed in animal zygote and 223 other cell types or tissues"/>
</dbReference>
<dbReference type="ExpressionAtlas" id="Q64092">
    <property type="expression patterns" value="baseline and differential"/>
</dbReference>
<dbReference type="GO" id="GO:0005737">
    <property type="term" value="C:cytoplasm"/>
    <property type="evidence" value="ECO:0000315"/>
    <property type="project" value="UniProtKB"/>
</dbReference>
<dbReference type="GO" id="GO:0005829">
    <property type="term" value="C:cytosol"/>
    <property type="evidence" value="ECO:0000314"/>
    <property type="project" value="UniProtKB"/>
</dbReference>
<dbReference type="GO" id="GO:0005765">
    <property type="term" value="C:lysosomal membrane"/>
    <property type="evidence" value="ECO:0000250"/>
    <property type="project" value="UniProtKB"/>
</dbReference>
<dbReference type="GO" id="GO:0005654">
    <property type="term" value="C:nucleoplasm"/>
    <property type="evidence" value="ECO:0000304"/>
    <property type="project" value="Reactome"/>
</dbReference>
<dbReference type="GO" id="GO:0005634">
    <property type="term" value="C:nucleus"/>
    <property type="evidence" value="ECO:0000314"/>
    <property type="project" value="UniProtKB"/>
</dbReference>
<dbReference type="GO" id="GO:0005667">
    <property type="term" value="C:transcription regulator complex"/>
    <property type="evidence" value="ECO:0000305"/>
    <property type="project" value="MGI"/>
</dbReference>
<dbReference type="GO" id="GO:0003677">
    <property type="term" value="F:DNA binding"/>
    <property type="evidence" value="ECO:0000314"/>
    <property type="project" value="MGI"/>
</dbReference>
<dbReference type="GO" id="GO:0003700">
    <property type="term" value="F:DNA-binding transcription factor activity"/>
    <property type="evidence" value="ECO:0000314"/>
    <property type="project" value="UniProtKB"/>
</dbReference>
<dbReference type="GO" id="GO:0000981">
    <property type="term" value="F:DNA-binding transcription factor activity, RNA polymerase II-specific"/>
    <property type="evidence" value="ECO:0000250"/>
    <property type="project" value="UniProtKB"/>
</dbReference>
<dbReference type="GO" id="GO:0070888">
    <property type="term" value="F:E-box binding"/>
    <property type="evidence" value="ECO:0000314"/>
    <property type="project" value="UniProtKB"/>
</dbReference>
<dbReference type="GO" id="GO:0046982">
    <property type="term" value="F:protein heterodimerization activity"/>
    <property type="evidence" value="ECO:0000353"/>
    <property type="project" value="UniProtKB"/>
</dbReference>
<dbReference type="GO" id="GO:0000976">
    <property type="term" value="F:transcription cis-regulatory region binding"/>
    <property type="evidence" value="ECO:0000314"/>
    <property type="project" value="UniProtKB"/>
</dbReference>
<dbReference type="GO" id="GO:0002250">
    <property type="term" value="P:adaptive immune response"/>
    <property type="evidence" value="ECO:0007669"/>
    <property type="project" value="UniProtKB-KW"/>
</dbReference>
<dbReference type="GO" id="GO:0006959">
    <property type="term" value="P:humoral immune response"/>
    <property type="evidence" value="ECO:0000315"/>
    <property type="project" value="UniProtKB"/>
</dbReference>
<dbReference type="GO" id="GO:0007040">
    <property type="term" value="P:lysosome organization"/>
    <property type="evidence" value="ECO:0000250"/>
    <property type="project" value="UniProtKB"/>
</dbReference>
<dbReference type="GO" id="GO:0120163">
    <property type="term" value="P:negative regulation of cold-induced thermogenesis"/>
    <property type="evidence" value="ECO:0000315"/>
    <property type="project" value="YuBioLab"/>
</dbReference>
<dbReference type="GO" id="GO:0090336">
    <property type="term" value="P:positive regulation of brown fat cell differentiation"/>
    <property type="evidence" value="ECO:0000315"/>
    <property type="project" value="UniProtKB"/>
</dbReference>
<dbReference type="GO" id="GO:0045785">
    <property type="term" value="P:positive regulation of cell adhesion"/>
    <property type="evidence" value="ECO:0000250"/>
    <property type="project" value="UniProtKB"/>
</dbReference>
<dbReference type="GO" id="GO:0045893">
    <property type="term" value="P:positive regulation of DNA-templated transcription"/>
    <property type="evidence" value="ECO:0000314"/>
    <property type="project" value="UniProtKB"/>
</dbReference>
<dbReference type="GO" id="GO:0045944">
    <property type="term" value="P:positive regulation of transcription by RNA polymerase II"/>
    <property type="evidence" value="ECO:0000314"/>
    <property type="project" value="UniProtKB"/>
</dbReference>
<dbReference type="GO" id="GO:0045670">
    <property type="term" value="P:regulation of osteoclast differentiation"/>
    <property type="evidence" value="ECO:0000316"/>
    <property type="project" value="MGI"/>
</dbReference>
<dbReference type="CDD" id="cd18928">
    <property type="entry name" value="bHLHzip_TFE3"/>
    <property type="match status" value="1"/>
</dbReference>
<dbReference type="FunFam" id="4.10.280.10:FF:000003">
    <property type="entry name" value="microphthalmia-associated transcription factor isoform X1"/>
    <property type="match status" value="1"/>
</dbReference>
<dbReference type="Gene3D" id="4.10.280.10">
    <property type="entry name" value="Helix-loop-helix DNA-binding domain"/>
    <property type="match status" value="1"/>
</dbReference>
<dbReference type="InterPro" id="IPR011598">
    <property type="entry name" value="bHLH_dom"/>
</dbReference>
<dbReference type="InterPro" id="IPR024100">
    <property type="entry name" value="bHLHzip_TFE3"/>
</dbReference>
<dbReference type="InterPro" id="IPR036638">
    <property type="entry name" value="HLH_DNA-bd_sf"/>
</dbReference>
<dbReference type="InterPro" id="IPR021802">
    <property type="entry name" value="MiT/TFE_C"/>
</dbReference>
<dbReference type="InterPro" id="IPR031867">
    <property type="entry name" value="MiT/TFE_N"/>
</dbReference>
<dbReference type="PANTHER" id="PTHR45776">
    <property type="entry name" value="MIP04163P"/>
    <property type="match status" value="1"/>
</dbReference>
<dbReference type="PANTHER" id="PTHR45776:SF3">
    <property type="entry name" value="TRANSCRIPTION FACTOR E3"/>
    <property type="match status" value="1"/>
</dbReference>
<dbReference type="Pfam" id="PF11851">
    <property type="entry name" value="DUF3371"/>
    <property type="match status" value="1"/>
</dbReference>
<dbReference type="Pfam" id="PF00010">
    <property type="entry name" value="HLH"/>
    <property type="match status" value="1"/>
</dbReference>
<dbReference type="Pfam" id="PF15951">
    <property type="entry name" value="MITF_TFEB_C_3_N"/>
    <property type="match status" value="1"/>
</dbReference>
<dbReference type="SMART" id="SM00353">
    <property type="entry name" value="HLH"/>
    <property type="match status" value="1"/>
</dbReference>
<dbReference type="SUPFAM" id="SSF47459">
    <property type="entry name" value="HLH, helix-loop-helix DNA-binding domain"/>
    <property type="match status" value="1"/>
</dbReference>
<dbReference type="PROSITE" id="PS50888">
    <property type="entry name" value="BHLH"/>
    <property type="match status" value="1"/>
</dbReference>